<gene>
    <name type="ordered locus">Rv0196</name>
</gene>
<sequence>MQGPRERMVVSAALLIRERGAHATAISDVLQHSGAPRGSAYHYFPGGRTQLLCEAVDYAGEHVAAMINEAEGGLELLDALIDKYRQQLLSTDFRAGCPIAAVSVEAGDEQDRERMAPVIARAAAVFDRWSDLTAQRFIADGIPPDRAHELAVLATSTLEGAILLARVRRDLTPLDLVHRQLRNLLLAELPERSR</sequence>
<reference key="1">
    <citation type="journal article" date="1998" name="Nature">
        <title>Deciphering the biology of Mycobacterium tuberculosis from the complete genome sequence.</title>
        <authorList>
            <person name="Cole S.T."/>
            <person name="Brosch R."/>
            <person name="Parkhill J."/>
            <person name="Garnier T."/>
            <person name="Churcher C.M."/>
            <person name="Harris D.E."/>
            <person name="Gordon S.V."/>
            <person name="Eiglmeier K."/>
            <person name="Gas S."/>
            <person name="Barry C.E. III"/>
            <person name="Tekaia F."/>
            <person name="Badcock K."/>
            <person name="Basham D."/>
            <person name="Brown D."/>
            <person name="Chillingworth T."/>
            <person name="Connor R."/>
            <person name="Davies R.M."/>
            <person name="Devlin K."/>
            <person name="Feltwell T."/>
            <person name="Gentles S."/>
            <person name="Hamlin N."/>
            <person name="Holroyd S."/>
            <person name="Hornsby T."/>
            <person name="Jagels K."/>
            <person name="Krogh A."/>
            <person name="McLean J."/>
            <person name="Moule S."/>
            <person name="Murphy L.D."/>
            <person name="Oliver S."/>
            <person name="Osborne J."/>
            <person name="Quail M.A."/>
            <person name="Rajandream M.A."/>
            <person name="Rogers J."/>
            <person name="Rutter S."/>
            <person name="Seeger K."/>
            <person name="Skelton S."/>
            <person name="Squares S."/>
            <person name="Squares R."/>
            <person name="Sulston J.E."/>
            <person name="Taylor K."/>
            <person name="Whitehead S."/>
            <person name="Barrell B.G."/>
        </authorList>
    </citation>
    <scope>NUCLEOTIDE SEQUENCE [LARGE SCALE GENOMIC DNA]</scope>
    <source>
        <strain>ATCC 25618 / H37Rv</strain>
    </source>
</reference>
<reference key="2">
    <citation type="journal article" date="2008" name="BMC Syst. Biol.">
        <title>targetTB: a target identification pipeline for Mycobacterium tuberculosis through an interactome, reactome and genome-scale structural analysis.</title>
        <authorList>
            <person name="Raman K."/>
            <person name="Yeturu K."/>
            <person name="Chandra N."/>
        </authorList>
    </citation>
    <scope>IDENTIFICATION AS A DRUG TARGET [LARGE SCALE ANALYSIS]</scope>
</reference>
<reference key="3">
    <citation type="journal article" date="2011" name="Mol. Cell. Proteomics">
        <title>Proteogenomic analysis of Mycobacterium tuberculosis by high resolution mass spectrometry.</title>
        <authorList>
            <person name="Kelkar D.S."/>
            <person name="Kumar D."/>
            <person name="Kumar P."/>
            <person name="Balakrishnan L."/>
            <person name="Muthusamy B."/>
            <person name="Yadav A.K."/>
            <person name="Shrivastava P."/>
            <person name="Marimuthu A."/>
            <person name="Anand S."/>
            <person name="Sundaram H."/>
            <person name="Kingsbury R."/>
            <person name="Harsha H.C."/>
            <person name="Nair B."/>
            <person name="Prasad T.S."/>
            <person name="Chauhan D.S."/>
            <person name="Katoch K."/>
            <person name="Katoch V.M."/>
            <person name="Kumar P."/>
            <person name="Chaerkady R."/>
            <person name="Ramachandran S."/>
            <person name="Dash D."/>
            <person name="Pandey A."/>
        </authorList>
    </citation>
    <scope>IDENTIFICATION BY MASS SPECTROMETRY [LARGE SCALE ANALYSIS]</scope>
    <source>
        <strain>ATCC 25618 / H37Rv</strain>
    </source>
</reference>
<comment type="miscellaneous">
    <text>Was identified as a high-confidence drug target.</text>
</comment>
<feature type="chain" id="PRO_0000382632" description="Uncharacterized HTH-type transcriptional regulator Rv0196">
    <location>
        <begin position="1"/>
        <end position="194"/>
    </location>
</feature>
<feature type="domain" description="HTH tetR-type">
    <location>
        <begin position="2"/>
        <end position="62"/>
    </location>
</feature>
<feature type="DNA-binding region" description="H-T-H motif" evidence="1">
    <location>
        <begin position="25"/>
        <end position="44"/>
    </location>
</feature>
<dbReference type="EMBL" id="AL123456">
    <property type="protein sequence ID" value="CCP42924.1"/>
    <property type="molecule type" value="Genomic_DNA"/>
</dbReference>
<dbReference type="PIR" id="A70838">
    <property type="entry name" value="A70838"/>
</dbReference>
<dbReference type="RefSeq" id="NP_214710.1">
    <property type="nucleotide sequence ID" value="NC_000962.3"/>
</dbReference>
<dbReference type="RefSeq" id="WP_003401168.1">
    <property type="nucleotide sequence ID" value="NZ_NVQJ01000001.1"/>
</dbReference>
<dbReference type="SMR" id="P9WME1"/>
<dbReference type="FunCoup" id="P9WME1">
    <property type="interactions" value="3"/>
</dbReference>
<dbReference type="STRING" id="83332.Rv0196"/>
<dbReference type="PaxDb" id="83332-Rv0196"/>
<dbReference type="DNASU" id="886760"/>
<dbReference type="GeneID" id="886760"/>
<dbReference type="KEGG" id="mtu:Rv0196"/>
<dbReference type="KEGG" id="mtv:RVBD_0196"/>
<dbReference type="TubercuList" id="Rv0196"/>
<dbReference type="eggNOG" id="COG1309">
    <property type="taxonomic scope" value="Bacteria"/>
</dbReference>
<dbReference type="InParanoid" id="P9WME1"/>
<dbReference type="OrthoDB" id="4567939at2"/>
<dbReference type="PhylomeDB" id="P9WME1"/>
<dbReference type="Proteomes" id="UP000001584">
    <property type="component" value="Chromosome"/>
</dbReference>
<dbReference type="GO" id="GO:0003677">
    <property type="term" value="F:DNA binding"/>
    <property type="evidence" value="ECO:0007669"/>
    <property type="project" value="UniProtKB-KW"/>
</dbReference>
<dbReference type="Gene3D" id="1.10.357.10">
    <property type="entry name" value="Tetracycline Repressor, domain 2"/>
    <property type="match status" value="1"/>
</dbReference>
<dbReference type="InterPro" id="IPR009057">
    <property type="entry name" value="Homeodomain-like_sf"/>
</dbReference>
<dbReference type="InterPro" id="IPR001647">
    <property type="entry name" value="HTH_TetR"/>
</dbReference>
<dbReference type="InterPro" id="IPR036271">
    <property type="entry name" value="Tet_transcr_reg_TetR-rel_C_sf"/>
</dbReference>
<dbReference type="InterPro" id="IPR054156">
    <property type="entry name" value="YxaF_TetR_C"/>
</dbReference>
<dbReference type="PANTHER" id="PTHR47506:SF3">
    <property type="entry name" value="HTH-TYPE TRANSCRIPTIONAL REGULATOR LMRA"/>
    <property type="match status" value="1"/>
</dbReference>
<dbReference type="PANTHER" id="PTHR47506">
    <property type="entry name" value="TRANSCRIPTIONAL REGULATORY PROTEIN"/>
    <property type="match status" value="1"/>
</dbReference>
<dbReference type="Pfam" id="PF21993">
    <property type="entry name" value="TetR_C_13_2"/>
    <property type="match status" value="1"/>
</dbReference>
<dbReference type="Pfam" id="PF00440">
    <property type="entry name" value="TetR_N"/>
    <property type="match status" value="1"/>
</dbReference>
<dbReference type="SUPFAM" id="SSF46689">
    <property type="entry name" value="Homeodomain-like"/>
    <property type="match status" value="1"/>
</dbReference>
<dbReference type="SUPFAM" id="SSF48498">
    <property type="entry name" value="Tetracyclin repressor-like, C-terminal domain"/>
    <property type="match status" value="1"/>
</dbReference>
<organism>
    <name type="scientific">Mycobacterium tuberculosis (strain ATCC 25618 / H37Rv)</name>
    <dbReference type="NCBI Taxonomy" id="83332"/>
    <lineage>
        <taxon>Bacteria</taxon>
        <taxon>Bacillati</taxon>
        <taxon>Actinomycetota</taxon>
        <taxon>Actinomycetes</taxon>
        <taxon>Mycobacteriales</taxon>
        <taxon>Mycobacteriaceae</taxon>
        <taxon>Mycobacterium</taxon>
        <taxon>Mycobacterium tuberculosis complex</taxon>
    </lineage>
</organism>
<keyword id="KW-0238">DNA-binding</keyword>
<keyword id="KW-1185">Reference proteome</keyword>
<keyword id="KW-0804">Transcription</keyword>
<keyword id="KW-0805">Transcription regulation</keyword>
<evidence type="ECO:0000250" key="1"/>
<name>Y196_MYCTU</name>
<accession>P9WME1</accession>
<accession>L0T2T3</accession>
<accession>O53647</accession>
<accession>Q7DAA6</accession>
<protein>
    <recommendedName>
        <fullName>Uncharacterized HTH-type transcriptional regulator Rv0196</fullName>
    </recommendedName>
</protein>
<proteinExistence type="evidence at protein level"/>